<keyword id="KW-1185">Reference proteome</keyword>
<keyword id="KW-0687">Ribonucleoprotein</keyword>
<keyword id="KW-0689">Ribosomal protein</keyword>
<gene>
    <name evidence="1" type="primary">rplL</name>
    <name type="ordered locus">COPRO5265_0949</name>
</gene>
<sequence length="125" mass="13253">MTIEEIISEIENMSVSQLAELVKALEEKFGVSASMPVAVAAPVAGPAAAAPAEEEKTSFDVILKEAGAKKLEVIKVVREITGLGLKEAKDLVESAPKPIKEGVTKEEAEELKKKLEEAGAVIELQ</sequence>
<reference key="1">
    <citation type="submission" date="2008-08" db="EMBL/GenBank/DDBJ databases">
        <title>The complete genome sequence of Coprothermobacter proteolyticus strain ATCC 5245 / DSM 5265 / BT.</title>
        <authorList>
            <person name="Dodson R.J."/>
            <person name="Durkin A.S."/>
            <person name="Wu M."/>
            <person name="Eisen J."/>
            <person name="Sutton G."/>
        </authorList>
    </citation>
    <scope>NUCLEOTIDE SEQUENCE [LARGE SCALE GENOMIC DNA]</scope>
    <source>
        <strain>ATCC 35245 / DSM 5265 / OCM 4 / BT</strain>
    </source>
</reference>
<organism>
    <name type="scientific">Coprothermobacter proteolyticus (strain ATCC 35245 / DSM 5265 / OCM 4 / BT)</name>
    <dbReference type="NCBI Taxonomy" id="309798"/>
    <lineage>
        <taxon>Bacteria</taxon>
        <taxon>Pseudomonadati</taxon>
        <taxon>Coprothermobacterota</taxon>
        <taxon>Coprothermobacteria</taxon>
        <taxon>Coprothermobacterales</taxon>
        <taxon>Coprothermobacteraceae</taxon>
        <taxon>Coprothermobacter</taxon>
    </lineage>
</organism>
<accession>B5Y931</accession>
<feature type="chain" id="PRO_1000121418" description="Large ribosomal subunit protein bL12">
    <location>
        <begin position="1"/>
        <end position="125"/>
    </location>
</feature>
<proteinExistence type="inferred from homology"/>
<dbReference type="EMBL" id="CP001145">
    <property type="protein sequence ID" value="ACI17598.1"/>
    <property type="molecule type" value="Genomic_DNA"/>
</dbReference>
<dbReference type="RefSeq" id="WP_012544250.1">
    <property type="nucleotide sequence ID" value="NC_011295.1"/>
</dbReference>
<dbReference type="SMR" id="B5Y931"/>
<dbReference type="STRING" id="309798.COPRO5265_0949"/>
<dbReference type="KEGG" id="cpo:COPRO5265_0949"/>
<dbReference type="eggNOG" id="COG0222">
    <property type="taxonomic scope" value="Bacteria"/>
</dbReference>
<dbReference type="HOGENOM" id="CLU_086499_3_2_9"/>
<dbReference type="OrthoDB" id="9811748at2"/>
<dbReference type="Proteomes" id="UP000001732">
    <property type="component" value="Chromosome"/>
</dbReference>
<dbReference type="GO" id="GO:0022625">
    <property type="term" value="C:cytosolic large ribosomal subunit"/>
    <property type="evidence" value="ECO:0007669"/>
    <property type="project" value="TreeGrafter"/>
</dbReference>
<dbReference type="GO" id="GO:0003729">
    <property type="term" value="F:mRNA binding"/>
    <property type="evidence" value="ECO:0007669"/>
    <property type="project" value="TreeGrafter"/>
</dbReference>
<dbReference type="GO" id="GO:0003735">
    <property type="term" value="F:structural constituent of ribosome"/>
    <property type="evidence" value="ECO:0007669"/>
    <property type="project" value="InterPro"/>
</dbReference>
<dbReference type="GO" id="GO:0006412">
    <property type="term" value="P:translation"/>
    <property type="evidence" value="ECO:0007669"/>
    <property type="project" value="UniProtKB-UniRule"/>
</dbReference>
<dbReference type="CDD" id="cd00387">
    <property type="entry name" value="Ribosomal_L7_L12"/>
    <property type="match status" value="1"/>
</dbReference>
<dbReference type="FunFam" id="1.20.5.710:FF:000008">
    <property type="entry name" value="50S ribosomal protein L7/L12"/>
    <property type="match status" value="1"/>
</dbReference>
<dbReference type="FunFam" id="3.30.1390.10:FF:000001">
    <property type="entry name" value="50S ribosomal protein L7/L12"/>
    <property type="match status" value="1"/>
</dbReference>
<dbReference type="Gene3D" id="3.30.1390.10">
    <property type="match status" value="1"/>
</dbReference>
<dbReference type="Gene3D" id="1.20.5.710">
    <property type="entry name" value="Single helix bin"/>
    <property type="match status" value="1"/>
</dbReference>
<dbReference type="HAMAP" id="MF_00368">
    <property type="entry name" value="Ribosomal_bL12"/>
    <property type="match status" value="1"/>
</dbReference>
<dbReference type="InterPro" id="IPR000206">
    <property type="entry name" value="Ribosomal_bL12"/>
</dbReference>
<dbReference type="InterPro" id="IPR013823">
    <property type="entry name" value="Ribosomal_bL12_C"/>
</dbReference>
<dbReference type="InterPro" id="IPR014719">
    <property type="entry name" value="Ribosomal_bL12_C/ClpS-like"/>
</dbReference>
<dbReference type="InterPro" id="IPR008932">
    <property type="entry name" value="Ribosomal_bL12_oligo"/>
</dbReference>
<dbReference type="InterPro" id="IPR036235">
    <property type="entry name" value="Ribosomal_bL12_oligo_N_sf"/>
</dbReference>
<dbReference type="NCBIfam" id="TIGR00855">
    <property type="entry name" value="L12"/>
    <property type="match status" value="1"/>
</dbReference>
<dbReference type="PANTHER" id="PTHR45987">
    <property type="entry name" value="39S RIBOSOMAL PROTEIN L12"/>
    <property type="match status" value="1"/>
</dbReference>
<dbReference type="PANTHER" id="PTHR45987:SF4">
    <property type="entry name" value="LARGE RIBOSOMAL SUBUNIT PROTEIN BL12M"/>
    <property type="match status" value="1"/>
</dbReference>
<dbReference type="Pfam" id="PF00542">
    <property type="entry name" value="Ribosomal_L12"/>
    <property type="match status" value="1"/>
</dbReference>
<dbReference type="Pfam" id="PF16320">
    <property type="entry name" value="Ribosomal_L12_N"/>
    <property type="match status" value="1"/>
</dbReference>
<dbReference type="SUPFAM" id="SSF54736">
    <property type="entry name" value="ClpS-like"/>
    <property type="match status" value="1"/>
</dbReference>
<dbReference type="SUPFAM" id="SSF48300">
    <property type="entry name" value="Ribosomal protein L7/12, oligomerisation (N-terminal) domain"/>
    <property type="match status" value="1"/>
</dbReference>
<name>RL7_COPPD</name>
<evidence type="ECO:0000255" key="1">
    <source>
        <dbReference type="HAMAP-Rule" id="MF_00368"/>
    </source>
</evidence>
<evidence type="ECO:0000305" key="2"/>
<protein>
    <recommendedName>
        <fullName evidence="1">Large ribosomal subunit protein bL12</fullName>
    </recommendedName>
    <alternativeName>
        <fullName evidence="2">50S ribosomal protein L7/L12</fullName>
    </alternativeName>
</protein>
<comment type="function">
    <text evidence="1">Forms part of the ribosomal stalk which helps the ribosome interact with GTP-bound translation factors. Is thus essential for accurate translation.</text>
</comment>
<comment type="subunit">
    <text evidence="1">Homodimer. Part of the ribosomal stalk of the 50S ribosomal subunit. Forms a multimeric L10(L12)X complex, where L10 forms an elongated spine to which 2 to 4 L12 dimers bind in a sequential fashion. Binds GTP-bound translation factors.</text>
</comment>
<comment type="similarity">
    <text evidence="1">Belongs to the bacterial ribosomal protein bL12 family.</text>
</comment>